<feature type="chain" id="PRO_0000247489" description="Major vault protein">
    <location>
        <begin position="1"/>
        <end position="849"/>
    </location>
</feature>
<feature type="repeat" description="MVP 1">
    <location>
        <begin position="2"/>
        <end position="54"/>
    </location>
</feature>
<feature type="repeat" description="MVP 2">
    <location>
        <begin position="55"/>
        <end position="109"/>
    </location>
</feature>
<feature type="repeat" description="MVP 3">
    <location>
        <begin position="110"/>
        <end position="162"/>
    </location>
</feature>
<feature type="repeat" description="MVP 4">
    <location>
        <begin position="163"/>
        <end position="215"/>
    </location>
</feature>
<feature type="repeat" description="MVP 5">
    <location>
        <begin position="216"/>
        <end position="270"/>
    </location>
</feature>
<feature type="repeat" description="MVP 6">
    <location>
        <begin position="271"/>
        <end position="321"/>
    </location>
</feature>
<feature type="repeat" description="MVP 7">
    <location>
        <begin position="322"/>
        <end position="378"/>
    </location>
</feature>
<feature type="repeat" description="MVP 8">
    <location>
        <begin position="379"/>
        <end position="458"/>
    </location>
</feature>
<feature type="repeat" description="MVP 9">
    <location>
        <begin position="459"/>
        <end position="521"/>
    </location>
</feature>
<accession>Q5ZMI4</accession>
<reference key="1">
    <citation type="journal article" date="2005" name="Genome Biol.">
        <title>Full-length cDNAs from chicken bursal lymphocytes to facilitate gene function analysis.</title>
        <authorList>
            <person name="Caldwell R.B."/>
            <person name="Kierzek A.M."/>
            <person name="Arakawa H."/>
            <person name="Bezzubov Y."/>
            <person name="Zaim J."/>
            <person name="Fiedler P."/>
            <person name="Kutter S."/>
            <person name="Blagodatski A."/>
            <person name="Kostovska D."/>
            <person name="Koter M."/>
            <person name="Plachy J."/>
            <person name="Carninci P."/>
            <person name="Hayashizaki Y."/>
            <person name="Buerstedde J.-M."/>
        </authorList>
    </citation>
    <scope>NUCLEOTIDE SEQUENCE [LARGE SCALE MRNA]</scope>
    <source>
        <strain>CB</strain>
        <tissue>Bursa of Fabricius</tissue>
    </source>
</reference>
<organism>
    <name type="scientific">Gallus gallus</name>
    <name type="common">Chicken</name>
    <dbReference type="NCBI Taxonomy" id="9031"/>
    <lineage>
        <taxon>Eukaryota</taxon>
        <taxon>Metazoa</taxon>
        <taxon>Chordata</taxon>
        <taxon>Craniata</taxon>
        <taxon>Vertebrata</taxon>
        <taxon>Euteleostomi</taxon>
        <taxon>Archelosauria</taxon>
        <taxon>Archosauria</taxon>
        <taxon>Dinosauria</taxon>
        <taxon>Saurischia</taxon>
        <taxon>Theropoda</taxon>
        <taxon>Coelurosauria</taxon>
        <taxon>Aves</taxon>
        <taxon>Neognathae</taxon>
        <taxon>Galloanserae</taxon>
        <taxon>Galliformes</taxon>
        <taxon>Phasianidae</taxon>
        <taxon>Phasianinae</taxon>
        <taxon>Gallus</taxon>
    </lineage>
</organism>
<keyword id="KW-0963">Cytoplasm</keyword>
<keyword id="KW-0539">Nucleus</keyword>
<keyword id="KW-1185">Reference proteome</keyword>
<keyword id="KW-0677">Repeat</keyword>
<keyword id="KW-0687">Ribonucleoprotein</keyword>
<proteinExistence type="evidence at transcript level"/>
<dbReference type="EMBL" id="AJ719400">
    <property type="protein sequence ID" value="CAG31059.1"/>
    <property type="molecule type" value="mRNA"/>
</dbReference>
<dbReference type="RefSeq" id="NP_001006336.1">
    <property type="nucleotide sequence ID" value="NM_001006336.1"/>
</dbReference>
<dbReference type="SMR" id="Q5ZMI4"/>
<dbReference type="FunCoup" id="Q5ZMI4">
    <property type="interactions" value="1213"/>
</dbReference>
<dbReference type="STRING" id="9031.ENSGALP00000064688"/>
<dbReference type="GlyGen" id="Q5ZMI4">
    <property type="glycosylation" value="1 site"/>
</dbReference>
<dbReference type="PaxDb" id="9031-ENSGALP00000000316"/>
<dbReference type="GeneID" id="420049"/>
<dbReference type="KEGG" id="gga:420049"/>
<dbReference type="CTD" id="9961"/>
<dbReference type="VEuPathDB" id="HostDB:geneid_420049"/>
<dbReference type="eggNOG" id="ENOG502QPP0">
    <property type="taxonomic scope" value="Eukaryota"/>
</dbReference>
<dbReference type="InParanoid" id="Q5ZMI4"/>
<dbReference type="OrthoDB" id="6125719at2759"/>
<dbReference type="PhylomeDB" id="Q5ZMI4"/>
<dbReference type="PRO" id="PR:Q5ZMI4"/>
<dbReference type="Proteomes" id="UP000000539">
    <property type="component" value="Unassembled WGS sequence"/>
</dbReference>
<dbReference type="GO" id="GO:0005737">
    <property type="term" value="C:cytoplasm"/>
    <property type="evidence" value="ECO:0000318"/>
    <property type="project" value="GO_Central"/>
</dbReference>
<dbReference type="GO" id="GO:0005634">
    <property type="term" value="C:nucleus"/>
    <property type="evidence" value="ECO:0000318"/>
    <property type="project" value="GO_Central"/>
</dbReference>
<dbReference type="GO" id="GO:1990904">
    <property type="term" value="C:ribonucleoprotein complex"/>
    <property type="evidence" value="ECO:0007669"/>
    <property type="project" value="UniProtKB-KW"/>
</dbReference>
<dbReference type="CDD" id="cd08825">
    <property type="entry name" value="MVP_shoulder"/>
    <property type="match status" value="1"/>
</dbReference>
<dbReference type="FunFam" id="2.30.30.620:FF:000002">
    <property type="entry name" value="Major vault protein"/>
    <property type="match status" value="1"/>
</dbReference>
<dbReference type="FunFam" id="2.30.30.560:FF:000002">
    <property type="entry name" value="Major vault protein-alpha"/>
    <property type="match status" value="1"/>
</dbReference>
<dbReference type="FunFam" id="2.30.30.570:FF:000002">
    <property type="entry name" value="Major vault protein-alpha"/>
    <property type="match status" value="1"/>
</dbReference>
<dbReference type="FunFam" id="2.30.30.550:FF:000001">
    <property type="entry name" value="major vault protein-like"/>
    <property type="match status" value="3"/>
</dbReference>
<dbReference type="FunFam" id="2.30.30.560:FF:000001">
    <property type="entry name" value="major vault protein-like"/>
    <property type="match status" value="1"/>
</dbReference>
<dbReference type="FunFam" id="2.30.30.570:FF:000001">
    <property type="entry name" value="major vault protein-like"/>
    <property type="match status" value="1"/>
</dbReference>
<dbReference type="FunFam" id="3.30.479.30:FF:000010">
    <property type="entry name" value="major vault protein-like"/>
    <property type="match status" value="1"/>
</dbReference>
<dbReference type="Gene3D" id="2.30.30.560">
    <property type="match status" value="2"/>
</dbReference>
<dbReference type="Gene3D" id="2.30.30.570">
    <property type="match status" value="2"/>
</dbReference>
<dbReference type="Gene3D" id="2.30.30.620">
    <property type="match status" value="1"/>
</dbReference>
<dbReference type="Gene3D" id="6.10.250.720">
    <property type="match status" value="1"/>
</dbReference>
<dbReference type="Gene3D" id="6.20.380.10">
    <property type="match status" value="1"/>
</dbReference>
<dbReference type="Gene3D" id="3.30.479.30">
    <property type="entry name" value="Band 7 domain"/>
    <property type="match status" value="1"/>
</dbReference>
<dbReference type="Gene3D" id="2.30.30.550">
    <property type="entry name" value="Major Vault Protein repeat"/>
    <property type="match status" value="4"/>
</dbReference>
<dbReference type="InterPro" id="IPR036013">
    <property type="entry name" value="Band_7/SPFH_dom_sf"/>
</dbReference>
<dbReference type="InterPro" id="IPR039059">
    <property type="entry name" value="MVP"/>
</dbReference>
<dbReference type="InterPro" id="IPR041139">
    <property type="entry name" value="MVP_rep_dom"/>
</dbReference>
<dbReference type="InterPro" id="IPR043023">
    <property type="entry name" value="MVP_rep_sf"/>
</dbReference>
<dbReference type="InterPro" id="IPR021870">
    <property type="entry name" value="MVP_shoulder"/>
</dbReference>
<dbReference type="InterPro" id="IPR041134">
    <property type="entry name" value="Vault_2"/>
</dbReference>
<dbReference type="InterPro" id="IPR043179">
    <property type="entry name" value="Vault_2_sf"/>
</dbReference>
<dbReference type="InterPro" id="IPR040989">
    <property type="entry name" value="Vault_3"/>
</dbReference>
<dbReference type="InterPro" id="IPR041136">
    <property type="entry name" value="Vault_4"/>
</dbReference>
<dbReference type="InterPro" id="IPR002499">
    <property type="entry name" value="Vault_N"/>
</dbReference>
<dbReference type="PANTHER" id="PTHR14165">
    <property type="entry name" value="MAJOR VAULT PROTEIN"/>
    <property type="match status" value="1"/>
</dbReference>
<dbReference type="PANTHER" id="PTHR14165:SF3">
    <property type="entry name" value="MAJOR VAULT PROTEIN"/>
    <property type="match status" value="1"/>
</dbReference>
<dbReference type="Pfam" id="PF11978">
    <property type="entry name" value="MVP_shoulder"/>
    <property type="match status" value="1"/>
</dbReference>
<dbReference type="Pfam" id="PF01505">
    <property type="entry name" value="Vault"/>
    <property type="match status" value="4"/>
</dbReference>
<dbReference type="Pfam" id="PF17794">
    <property type="entry name" value="Vault_2"/>
    <property type="match status" value="2"/>
</dbReference>
<dbReference type="Pfam" id="PF17795">
    <property type="entry name" value="Vault_3"/>
    <property type="match status" value="1"/>
</dbReference>
<dbReference type="Pfam" id="PF17796">
    <property type="entry name" value="Vault_4"/>
    <property type="match status" value="1"/>
</dbReference>
<dbReference type="PROSITE" id="PS51224">
    <property type="entry name" value="MVP"/>
    <property type="match status" value="8"/>
</dbReference>
<sequence length="849" mass="93822">MEDPVIRIPPYHYIHVLDLNSNVTRVEVGPHSFIRQDHERVVFSPKRMVMVPPRHYCVVLNPVARGPTGAVLFDGAGQAQLRHADLDIRLTQEPFPLYPGEELQQGVTPLQVVLADTALRLRALLDFEDEDGNKFVAGDEWLFEGPGTYIPHKEVEVVETLQATIIRHNQAIRLRARKECLDRQGTRRVTGEEWLVKRVGAYLPGVYEEVVDVVDAYVLTDKKALHLRATRTFEDVQGHVRRTGEEWLVTQEQSEAYVPDVFEEVVAEVLVTTLGPRQYCVVLDPVGPNGQPQLGQQRVVKGEKSFFLQPGERLQAGIQDVYVLSEDEGLLLQALQTIKDTDEDGTEVIRRAGDRWLARGPLEYVPPAEVTVLERRQALALAENEGIYVRDIRTGKVRVVTGQTYMLTESEELWEKELPPGVEVLLAEARGDTAGQDSGIQSSSGPSFGVQERDRTRAVTYQVPHNAAVQVYDYRERRARVVLGPELVVLGPGEQLTVLSLSGGRPKRPHARRSLCLRLGPDFCADIVTIETADHARLQLQLAYNWHFEVPEDPKALGRLFSVPDFVGDACKALASRVRGAVAAVTFDDFHKNSNRLICSAVFGFDEGGRLREHLRFVPNGLVVTSVDIQSVEPVDQRTRDALQRSVQLAIEIATNSQEAAARHEAERLAQEARVRLERQRLLDQAEAERARRELLELEALSAAVESAGAARAEAQARAEAARIEAEAAILQAKLKAEAVAIETEAELARLERMQAQEVRAQRARAEAEAARAQALAAVEASKVREVAAALGPETIRDIARAGPELQVKLLQGLGLQSALITDGAAPLNLFSTARGLLGLAVPPEPSTS</sequence>
<name>MVP_CHICK</name>
<protein>
    <recommendedName>
        <fullName>Major vault protein</fullName>
        <shortName>MVP</shortName>
    </recommendedName>
</protein>
<gene>
    <name type="primary">MVP</name>
    <name type="ORF">RCJMB04_1p8</name>
</gene>
<evidence type="ECO:0000250" key="1"/>
<evidence type="ECO:0000250" key="2">
    <source>
        <dbReference type="UniProtKB" id="Q14764"/>
    </source>
</evidence>
<comment type="function">
    <text evidence="1">Required for normal vault structure. Vaults are multi-subunit structures that may act as scaffolds for proteins involved in signal transduction. Vaults may also play a role in nucleo-cytoplasmic transport (By similarity).</text>
</comment>
<comment type="subunit">
    <text evidence="1">The vault ribonucleoprotein particle is a huge (400 A x 670 A) cage structure of 12.9 MDa. It consists of a dimer of half-vaults, with each half-vault comprising 39 identical major vault protein (MVP) chains, PARP4 and one or more vault RNAs (vRNAs) (By similarity).</text>
</comment>
<comment type="subcellular location">
    <subcellularLocation>
        <location evidence="2">Cytoplasm</location>
    </subcellularLocation>
    <subcellularLocation>
        <location evidence="2">Nucleus</location>
    </subcellularLocation>
</comment>